<sequence>MIDPLASPGSAPLIVIAGPTASGKSALALRVARRFNGVVINADSMQVYRDLRILSARPSVEDEAAAPHALYGVLDGAEVCSVGRWLALADGAVAAARAAGRLPILCGGTGLYLKAALEGLASVPEVAPEVRAEARELLAALGPAALHAKLAELDRAMAERLRPSDAQRIARAYEVVRGTGRSLMDWWSDPVATPALPGRPLLLVIDPPRAAQRAACDARLLAMVAAGALDELALLLARRLDPALPVMRAVGVPELARTLRGEVGLAEAVERAQGATRRYAKRQGTWIRTQLRPDRVLSESLVTQLSESQLTDIDNFLYAFLLTGAS</sequence>
<reference key="1">
    <citation type="journal article" date="2011" name="Stand. Genomic Sci.">
        <title>Complete genome sequence of Rhodospirillum rubrum type strain (S1).</title>
        <authorList>
            <person name="Munk A.C."/>
            <person name="Copeland A."/>
            <person name="Lucas S."/>
            <person name="Lapidus A."/>
            <person name="Del Rio T.G."/>
            <person name="Barry K."/>
            <person name="Detter J.C."/>
            <person name="Hammon N."/>
            <person name="Israni S."/>
            <person name="Pitluck S."/>
            <person name="Brettin T."/>
            <person name="Bruce D."/>
            <person name="Han C."/>
            <person name="Tapia R."/>
            <person name="Gilna P."/>
            <person name="Schmutz J."/>
            <person name="Larimer F."/>
            <person name="Land M."/>
            <person name="Kyrpides N.C."/>
            <person name="Mavromatis K."/>
            <person name="Richardson P."/>
            <person name="Rohde M."/>
            <person name="Goeker M."/>
            <person name="Klenk H.P."/>
            <person name="Zhang Y."/>
            <person name="Roberts G.P."/>
            <person name="Reslewic S."/>
            <person name="Schwartz D.C."/>
        </authorList>
    </citation>
    <scope>NUCLEOTIDE SEQUENCE [LARGE SCALE GENOMIC DNA]</scope>
    <source>
        <strain>ATCC 11170 / ATH 1.1.1 / DSM 467 / LMG 4362 / NCIMB 8255 / S1</strain>
    </source>
</reference>
<accession>Q2RX74</accession>
<gene>
    <name evidence="1" type="primary">miaA</name>
    <name type="ordered locus">Rru_A0466</name>
</gene>
<evidence type="ECO:0000255" key="1">
    <source>
        <dbReference type="HAMAP-Rule" id="MF_00185"/>
    </source>
</evidence>
<proteinExistence type="inferred from homology"/>
<organism>
    <name type="scientific">Rhodospirillum rubrum (strain ATCC 11170 / ATH 1.1.1 / DSM 467 / LMG 4362 / NCIMB 8255 / S1)</name>
    <dbReference type="NCBI Taxonomy" id="269796"/>
    <lineage>
        <taxon>Bacteria</taxon>
        <taxon>Pseudomonadati</taxon>
        <taxon>Pseudomonadota</taxon>
        <taxon>Alphaproteobacteria</taxon>
        <taxon>Rhodospirillales</taxon>
        <taxon>Rhodospirillaceae</taxon>
        <taxon>Rhodospirillum</taxon>
    </lineage>
</organism>
<comment type="function">
    <text evidence="1">Catalyzes the transfer of a dimethylallyl group onto the adenine at position 37 in tRNAs that read codons beginning with uridine, leading to the formation of N6-(dimethylallyl)adenosine (i(6)A).</text>
</comment>
<comment type="catalytic activity">
    <reaction evidence="1">
        <text>adenosine(37) in tRNA + dimethylallyl diphosphate = N(6)-dimethylallyladenosine(37) in tRNA + diphosphate</text>
        <dbReference type="Rhea" id="RHEA:26482"/>
        <dbReference type="Rhea" id="RHEA-COMP:10162"/>
        <dbReference type="Rhea" id="RHEA-COMP:10375"/>
        <dbReference type="ChEBI" id="CHEBI:33019"/>
        <dbReference type="ChEBI" id="CHEBI:57623"/>
        <dbReference type="ChEBI" id="CHEBI:74411"/>
        <dbReference type="ChEBI" id="CHEBI:74415"/>
        <dbReference type="EC" id="2.5.1.75"/>
    </reaction>
</comment>
<comment type="cofactor">
    <cofactor evidence="1">
        <name>Mg(2+)</name>
        <dbReference type="ChEBI" id="CHEBI:18420"/>
    </cofactor>
</comment>
<comment type="subunit">
    <text evidence="1">Monomer.</text>
</comment>
<comment type="similarity">
    <text evidence="1">Belongs to the IPP transferase family.</text>
</comment>
<dbReference type="EC" id="2.5.1.75" evidence="1"/>
<dbReference type="EMBL" id="CP000230">
    <property type="protein sequence ID" value="ABC21271.1"/>
    <property type="molecule type" value="Genomic_DNA"/>
</dbReference>
<dbReference type="RefSeq" id="WP_011388225.1">
    <property type="nucleotide sequence ID" value="NC_007643.1"/>
</dbReference>
<dbReference type="RefSeq" id="YP_425558.1">
    <property type="nucleotide sequence ID" value="NC_007643.1"/>
</dbReference>
<dbReference type="SMR" id="Q2RX74"/>
<dbReference type="STRING" id="269796.Rru_A0466"/>
<dbReference type="EnsemblBacteria" id="ABC21271">
    <property type="protein sequence ID" value="ABC21271"/>
    <property type="gene ID" value="Rru_A0466"/>
</dbReference>
<dbReference type="KEGG" id="rru:Rru_A0466"/>
<dbReference type="PATRIC" id="fig|269796.9.peg.523"/>
<dbReference type="eggNOG" id="COG0324">
    <property type="taxonomic scope" value="Bacteria"/>
</dbReference>
<dbReference type="HOGENOM" id="CLU_032616_0_1_5"/>
<dbReference type="PhylomeDB" id="Q2RX74"/>
<dbReference type="Proteomes" id="UP000001929">
    <property type="component" value="Chromosome"/>
</dbReference>
<dbReference type="GO" id="GO:0005524">
    <property type="term" value="F:ATP binding"/>
    <property type="evidence" value="ECO:0007669"/>
    <property type="project" value="UniProtKB-UniRule"/>
</dbReference>
<dbReference type="GO" id="GO:0052381">
    <property type="term" value="F:tRNA dimethylallyltransferase activity"/>
    <property type="evidence" value="ECO:0007669"/>
    <property type="project" value="UniProtKB-UniRule"/>
</dbReference>
<dbReference type="GO" id="GO:0006400">
    <property type="term" value="P:tRNA modification"/>
    <property type="evidence" value="ECO:0007669"/>
    <property type="project" value="TreeGrafter"/>
</dbReference>
<dbReference type="Gene3D" id="1.10.20.140">
    <property type="match status" value="1"/>
</dbReference>
<dbReference type="Gene3D" id="3.40.50.300">
    <property type="entry name" value="P-loop containing nucleotide triphosphate hydrolases"/>
    <property type="match status" value="1"/>
</dbReference>
<dbReference type="HAMAP" id="MF_00185">
    <property type="entry name" value="IPP_trans"/>
    <property type="match status" value="1"/>
</dbReference>
<dbReference type="InterPro" id="IPR039657">
    <property type="entry name" value="Dimethylallyltransferase"/>
</dbReference>
<dbReference type="InterPro" id="IPR018022">
    <property type="entry name" value="IPT"/>
</dbReference>
<dbReference type="InterPro" id="IPR027417">
    <property type="entry name" value="P-loop_NTPase"/>
</dbReference>
<dbReference type="NCBIfam" id="TIGR00174">
    <property type="entry name" value="miaA"/>
    <property type="match status" value="1"/>
</dbReference>
<dbReference type="PANTHER" id="PTHR11088">
    <property type="entry name" value="TRNA DIMETHYLALLYLTRANSFERASE"/>
    <property type="match status" value="1"/>
</dbReference>
<dbReference type="PANTHER" id="PTHR11088:SF60">
    <property type="entry name" value="TRNA DIMETHYLALLYLTRANSFERASE"/>
    <property type="match status" value="1"/>
</dbReference>
<dbReference type="Pfam" id="PF01715">
    <property type="entry name" value="IPPT"/>
    <property type="match status" value="1"/>
</dbReference>
<dbReference type="SUPFAM" id="SSF52540">
    <property type="entry name" value="P-loop containing nucleoside triphosphate hydrolases"/>
    <property type="match status" value="1"/>
</dbReference>
<feature type="chain" id="PRO_0000377294" description="tRNA dimethylallyltransferase">
    <location>
        <begin position="1"/>
        <end position="326"/>
    </location>
</feature>
<feature type="region of interest" description="Interaction with substrate tRNA" evidence="1">
    <location>
        <begin position="43"/>
        <end position="46"/>
    </location>
</feature>
<feature type="region of interest" description="Interaction with substrate tRNA" evidence="1">
    <location>
        <begin position="167"/>
        <end position="171"/>
    </location>
</feature>
<feature type="binding site" evidence="1">
    <location>
        <begin position="18"/>
        <end position="25"/>
    </location>
    <ligand>
        <name>ATP</name>
        <dbReference type="ChEBI" id="CHEBI:30616"/>
    </ligand>
</feature>
<feature type="binding site" evidence="1">
    <location>
        <begin position="20"/>
        <end position="25"/>
    </location>
    <ligand>
        <name>substrate</name>
    </ligand>
</feature>
<feature type="site" description="Interaction with substrate tRNA" evidence="1">
    <location>
        <position position="109"/>
    </location>
</feature>
<feature type="site" description="Interaction with substrate tRNA" evidence="1">
    <location>
        <position position="131"/>
    </location>
</feature>
<protein>
    <recommendedName>
        <fullName evidence="1">tRNA dimethylallyltransferase</fullName>
        <ecNumber evidence="1">2.5.1.75</ecNumber>
    </recommendedName>
    <alternativeName>
        <fullName evidence="1">Dimethylallyl diphosphate:tRNA dimethylallyltransferase</fullName>
        <shortName evidence="1">DMAPP:tRNA dimethylallyltransferase</shortName>
        <shortName evidence="1">DMATase</shortName>
    </alternativeName>
    <alternativeName>
        <fullName evidence="1">Isopentenyl-diphosphate:tRNA isopentenyltransferase</fullName>
        <shortName evidence="1">IPP transferase</shortName>
        <shortName evidence="1">IPPT</shortName>
        <shortName evidence="1">IPTase</shortName>
    </alternativeName>
</protein>
<keyword id="KW-0067">ATP-binding</keyword>
<keyword id="KW-0460">Magnesium</keyword>
<keyword id="KW-0547">Nucleotide-binding</keyword>
<keyword id="KW-1185">Reference proteome</keyword>
<keyword id="KW-0808">Transferase</keyword>
<keyword id="KW-0819">tRNA processing</keyword>
<name>MIAA_RHORT</name>